<dbReference type="EMBL" id="AY515560">
    <property type="protein sequence ID" value="AAS00691.1"/>
    <property type="molecule type" value="mRNA"/>
</dbReference>
<dbReference type="EMBL" id="AC002343">
    <property type="protein sequence ID" value="AAB63613.1"/>
    <property type="status" value="ALT_SEQ"/>
    <property type="molecule type" value="Genomic_DNA"/>
</dbReference>
<dbReference type="EMBL" id="AL109619">
    <property type="protein sequence ID" value="CAB51655.1"/>
    <property type="status" value="ALT_SEQ"/>
    <property type="molecule type" value="Genomic_DNA"/>
</dbReference>
<dbReference type="EMBL" id="AL161560">
    <property type="protein sequence ID" value="CAB81330.1"/>
    <property type="status" value="ALT_SEQ"/>
    <property type="molecule type" value="Genomic_DNA"/>
</dbReference>
<dbReference type="EMBL" id="CP002687">
    <property type="protein sequence ID" value="AEE84852.1"/>
    <property type="molecule type" value="Genomic_DNA"/>
</dbReference>
<dbReference type="EMBL" id="AF387015">
    <property type="protein sequence ID" value="AAK62460.1"/>
    <property type="status" value="ALT_INIT"/>
    <property type="molecule type" value="mRNA"/>
</dbReference>
<dbReference type="PIR" id="T13460">
    <property type="entry name" value="T13460"/>
</dbReference>
<dbReference type="RefSeq" id="NP_567694.2">
    <property type="nucleotide sequence ID" value="NM_118544.4"/>
</dbReference>
<dbReference type="SMR" id="Q6R3L0"/>
<dbReference type="FunCoup" id="Q6R3L0">
    <property type="interactions" value="85"/>
</dbReference>
<dbReference type="STRING" id="3702.Q6R3L0"/>
<dbReference type="TCDB" id="2.A.67.2.2">
    <property type="family name" value="the oligopeptide transporter (opt) family"/>
</dbReference>
<dbReference type="iPTMnet" id="Q6R3L0"/>
<dbReference type="PaxDb" id="3702-AT4G24120.1"/>
<dbReference type="ProteomicsDB" id="242373"/>
<dbReference type="EnsemblPlants" id="AT4G24120.1">
    <property type="protein sequence ID" value="AT4G24120.1"/>
    <property type="gene ID" value="AT4G24120"/>
</dbReference>
<dbReference type="GeneID" id="828512"/>
<dbReference type="Gramene" id="AT4G24120.1">
    <property type="protein sequence ID" value="AT4G24120.1"/>
    <property type="gene ID" value="AT4G24120"/>
</dbReference>
<dbReference type="KEGG" id="ath:AT4G24120"/>
<dbReference type="Araport" id="AT4G24120"/>
<dbReference type="TAIR" id="AT4G24120">
    <property type="gene designation" value="YSL1"/>
</dbReference>
<dbReference type="eggNOG" id="ENOG502QSSI">
    <property type="taxonomic scope" value="Eukaryota"/>
</dbReference>
<dbReference type="HOGENOM" id="CLU_015477_2_0_1"/>
<dbReference type="InParanoid" id="Q6R3L0"/>
<dbReference type="OMA" id="ENWGWYI"/>
<dbReference type="PhylomeDB" id="Q6R3L0"/>
<dbReference type="PRO" id="PR:Q6R3L0"/>
<dbReference type="Proteomes" id="UP000006548">
    <property type="component" value="Chromosome 4"/>
</dbReference>
<dbReference type="ExpressionAtlas" id="Q6R3L0">
    <property type="expression patterns" value="baseline and differential"/>
</dbReference>
<dbReference type="GO" id="GO:0005886">
    <property type="term" value="C:plasma membrane"/>
    <property type="evidence" value="ECO:0000314"/>
    <property type="project" value="TAIR"/>
</dbReference>
<dbReference type="GO" id="GO:0035673">
    <property type="term" value="F:oligopeptide transmembrane transporter activity"/>
    <property type="evidence" value="ECO:0007669"/>
    <property type="project" value="InterPro"/>
</dbReference>
<dbReference type="GO" id="GO:0003006">
    <property type="term" value="P:developmental process involved in reproduction"/>
    <property type="evidence" value="ECO:0000316"/>
    <property type="project" value="TAIR"/>
</dbReference>
<dbReference type="GO" id="GO:0006826">
    <property type="term" value="P:iron ion transport"/>
    <property type="evidence" value="ECO:0007669"/>
    <property type="project" value="UniProtKB-KW"/>
</dbReference>
<dbReference type="GO" id="GO:0010039">
    <property type="term" value="P:response to iron ion"/>
    <property type="evidence" value="ECO:0000270"/>
    <property type="project" value="TAIR"/>
</dbReference>
<dbReference type="GO" id="GO:0048316">
    <property type="term" value="P:seed development"/>
    <property type="evidence" value="ECO:0000316"/>
    <property type="project" value="TAIR"/>
</dbReference>
<dbReference type="InterPro" id="IPR004813">
    <property type="entry name" value="OPT"/>
</dbReference>
<dbReference type="InterPro" id="IPR045035">
    <property type="entry name" value="YSL-like"/>
</dbReference>
<dbReference type="NCBIfam" id="TIGR00728">
    <property type="entry name" value="OPT_sfam"/>
    <property type="match status" value="1"/>
</dbReference>
<dbReference type="PANTHER" id="PTHR31645:SF11">
    <property type="entry name" value="METAL-NICOTIANAMINE TRANSPORTER YSL1"/>
    <property type="match status" value="1"/>
</dbReference>
<dbReference type="PANTHER" id="PTHR31645">
    <property type="entry name" value="OLIGOPEPTIDE TRANSPORTER YGL114W-RELATED"/>
    <property type="match status" value="1"/>
</dbReference>
<dbReference type="Pfam" id="PF03169">
    <property type="entry name" value="OPT"/>
    <property type="match status" value="1"/>
</dbReference>
<comment type="function">
    <text evidence="4 5">Involved in iron loading of the seeds. Acts probably as a transporter of iron- and metal-nicotianamine chelates.</text>
</comment>
<comment type="subcellular location">
    <subcellularLocation>
        <location evidence="6">Membrane</location>
        <topology evidence="6">Multi-pass membrane protein</topology>
    </subcellularLocation>
</comment>
<comment type="tissue specificity">
    <text evidence="3 4 5">Low levels of expression in leaves and shoots, but not detected in roots. Restricted to the vasculature, in the xylem parenchyma surrounding xylem tubes. Expressed in pollen grains, in the vasculature of petals and sepals, in the carpel veins, in the style underneath the stigmatic papillae, in the vascular tissue of the funiculus and in the chalazal endosperm.</text>
</comment>
<comment type="developmental stage">
    <text evidence="5">Highly expressed during leaf senescence.</text>
</comment>
<comment type="induction">
    <text evidence="3 4 5">Slight induction by manganese, copper or zinc deficiency. Inhibited upon iron deficiency and induced by iron overload.</text>
</comment>
<comment type="disruption phenotype">
    <text evidence="4 5">Plants do not show visible phenotype, but a decreased iron and nicotianamine content in seeds resulting in a transient defect in germination.</text>
</comment>
<comment type="similarity">
    <text evidence="6">Belongs to the YSL (TC 2.A.67.2) family.</text>
</comment>
<comment type="sequence caution" evidence="6">
    <conflict type="erroneous gene model prediction">
        <sequence resource="EMBL-CDS" id="AAB63613"/>
    </conflict>
</comment>
<comment type="sequence caution" evidence="6">
    <conflict type="erroneous initiation">
        <sequence resource="EMBL-CDS" id="AAK62460"/>
    </conflict>
</comment>
<sequence>MEIEQRRIMKREGEEEEDNNQLSLQEEEPDTEEEMSGRTIEPWTKQITVRGVFVSIVIGVVFSVIAQKLNLTTGIVPNLNSSAALLAFVFVQTWTKILKKSGFVAKPFTRQENTMIQTSAVACYGIAVGGGFASYLLGLNHKTYVLSGVNLEGNSPKSVKEPGLGWMTAYLFVVCFIGLFVLIPLRKVMIVDLKLTYPSGLATAVLINGFHTQGDAQAKKQVRGFMKYFSFSFLWGFFQWFFSGIEDCGFAQFPTFGLKAWKQTFFFDFSMTFVGAGMICSHLVNLSLLLGAILSYGLMWPLLDKLKGSWFPDNLDEHNMKSIYGYKVFLSVALILGDGLYTFVKILFVTIANVNARLKNKPNDLDDVGHKKQRKDLKEDENFLRDKIPMWFAVSGYLTFAAVSTVVVPLIFPQLKWYYVIVAYIFAPSLAFCNAYGAGLTDINMAYNYGKIGLFVIAAVTGRENGVVAGLAGCGLIKSVVSVSCILMQDFKTAHYTMTSPKAMFASQMIGTVVGCIVTPLSFFLFYKAFDIGNPNGEFKAPYALIYRNMAILGVQGFSALPLHCLQMCYGFFGFAVLVNVVRDLTPAKIGRFMPLPTAMAVPFLVGAYFAIDMCVGTLIVFVWEKMNRKKAEFMVPAVASGLICGEGLWTLPAAVLALAGVKPPICMKFLAS</sequence>
<feature type="chain" id="PRO_0000311412" description="Metal-nicotianamine transporter YSL1">
    <location>
        <begin position="1"/>
        <end position="673"/>
    </location>
</feature>
<feature type="transmembrane region" description="Helical" evidence="1">
    <location>
        <begin position="46"/>
        <end position="66"/>
    </location>
</feature>
<feature type="transmembrane region" description="Helical" evidence="1">
    <location>
        <begin position="71"/>
        <end position="91"/>
    </location>
</feature>
<feature type="transmembrane region" description="Helical" evidence="1">
    <location>
        <begin position="119"/>
        <end position="139"/>
    </location>
</feature>
<feature type="transmembrane region" description="Helical" evidence="1">
    <location>
        <begin position="163"/>
        <end position="183"/>
    </location>
</feature>
<feature type="transmembrane region" description="Helical" evidence="1">
    <location>
        <begin position="225"/>
        <end position="245"/>
    </location>
</feature>
<feature type="transmembrane region" description="Helical" evidence="1">
    <location>
        <begin position="260"/>
        <end position="280"/>
    </location>
</feature>
<feature type="transmembrane region" description="Helical" evidence="1">
    <location>
        <begin position="283"/>
        <end position="303"/>
    </location>
</feature>
<feature type="transmembrane region" description="Helical" evidence="1">
    <location>
        <begin position="328"/>
        <end position="348"/>
    </location>
</feature>
<feature type="transmembrane region" description="Helical" evidence="1">
    <location>
        <begin position="392"/>
        <end position="412"/>
    </location>
</feature>
<feature type="transmembrane region" description="Helical" evidence="1">
    <location>
        <begin position="420"/>
        <end position="440"/>
    </location>
</feature>
<feature type="transmembrane region" description="Helical" evidence="1">
    <location>
        <begin position="442"/>
        <end position="462"/>
    </location>
</feature>
<feature type="transmembrane region" description="Helical" evidence="1">
    <location>
        <begin position="467"/>
        <end position="487"/>
    </location>
</feature>
<feature type="transmembrane region" description="Helical" evidence="1">
    <location>
        <begin position="510"/>
        <end position="530"/>
    </location>
</feature>
<feature type="transmembrane region" description="Helical" evidence="1">
    <location>
        <begin position="558"/>
        <end position="578"/>
    </location>
</feature>
<feature type="transmembrane region" description="Helical" evidence="1">
    <location>
        <begin position="604"/>
        <end position="624"/>
    </location>
</feature>
<feature type="transmembrane region" description="Helical" evidence="1">
    <location>
        <begin position="642"/>
        <end position="662"/>
    </location>
</feature>
<feature type="region of interest" description="Disordered" evidence="2">
    <location>
        <begin position="1"/>
        <end position="39"/>
    </location>
</feature>
<feature type="compositionally biased region" description="Basic and acidic residues" evidence="2">
    <location>
        <begin position="1"/>
        <end position="13"/>
    </location>
</feature>
<feature type="compositionally biased region" description="Acidic residues" evidence="2">
    <location>
        <begin position="14"/>
        <end position="34"/>
    </location>
</feature>
<feature type="sequence conflict" description="In Ref. 1; AAS00691." evidence="6" ref="1">
    <original>T</original>
    <variation>A</variation>
    <location>
        <position position="72"/>
    </location>
</feature>
<feature type="sequence conflict" description="In Ref. 1; AAS00691." evidence="6" ref="1">
    <original>R</original>
    <variation>G</variation>
    <location>
        <position position="548"/>
    </location>
</feature>
<feature type="sequence conflict" description="In Ref. 2; AAB63613 and 4; AAK62460." evidence="6" ref="2 4">
    <original>Q</original>
    <variation>R</variation>
    <location>
        <position position="556"/>
    </location>
</feature>
<organism>
    <name type="scientific">Arabidopsis thaliana</name>
    <name type="common">Mouse-ear cress</name>
    <dbReference type="NCBI Taxonomy" id="3702"/>
    <lineage>
        <taxon>Eukaryota</taxon>
        <taxon>Viridiplantae</taxon>
        <taxon>Streptophyta</taxon>
        <taxon>Embryophyta</taxon>
        <taxon>Tracheophyta</taxon>
        <taxon>Spermatophyta</taxon>
        <taxon>Magnoliopsida</taxon>
        <taxon>eudicotyledons</taxon>
        <taxon>Gunneridae</taxon>
        <taxon>Pentapetalae</taxon>
        <taxon>rosids</taxon>
        <taxon>malvids</taxon>
        <taxon>Brassicales</taxon>
        <taxon>Brassicaceae</taxon>
        <taxon>Camelineae</taxon>
        <taxon>Arabidopsis</taxon>
    </lineage>
</organism>
<evidence type="ECO:0000255" key="1"/>
<evidence type="ECO:0000256" key="2">
    <source>
        <dbReference type="SAM" id="MobiDB-lite"/>
    </source>
</evidence>
<evidence type="ECO:0000269" key="3">
    <source>
    </source>
</evidence>
<evidence type="ECO:0000269" key="4">
    <source>
    </source>
</evidence>
<evidence type="ECO:0000269" key="5">
    <source>
    </source>
</evidence>
<evidence type="ECO:0000305" key="6"/>
<name>YSL1_ARATH</name>
<gene>
    <name type="primary">YSL1</name>
    <name type="ordered locus">At4g24120</name>
    <name type="ORF">T19F6.110</name>
    <name type="ORF">T19F6.8</name>
</gene>
<reference key="1">
    <citation type="submission" date="2003-12" db="EMBL/GenBank/DDBJ databases">
        <title>The yellow stripe-like (YSL) family of metal-nicotianamine transporters.</title>
        <authorList>
            <person name="Roberts L.A."/>
            <person name="Walker E.L."/>
        </authorList>
    </citation>
    <scope>NUCLEOTIDE SEQUENCE [MRNA]</scope>
</reference>
<reference key="2">
    <citation type="journal article" date="1999" name="Nature">
        <title>Sequence and analysis of chromosome 4 of the plant Arabidopsis thaliana.</title>
        <authorList>
            <person name="Mayer K.F.X."/>
            <person name="Schueller C."/>
            <person name="Wambutt R."/>
            <person name="Murphy G."/>
            <person name="Volckaert G."/>
            <person name="Pohl T."/>
            <person name="Duesterhoeft A."/>
            <person name="Stiekema W."/>
            <person name="Entian K.-D."/>
            <person name="Terryn N."/>
            <person name="Harris B."/>
            <person name="Ansorge W."/>
            <person name="Brandt P."/>
            <person name="Grivell L.A."/>
            <person name="Rieger M."/>
            <person name="Weichselgartner M."/>
            <person name="de Simone V."/>
            <person name="Obermaier B."/>
            <person name="Mache R."/>
            <person name="Mueller M."/>
            <person name="Kreis M."/>
            <person name="Delseny M."/>
            <person name="Puigdomenech P."/>
            <person name="Watson M."/>
            <person name="Schmidtheini T."/>
            <person name="Reichert B."/>
            <person name="Portetelle D."/>
            <person name="Perez-Alonso M."/>
            <person name="Boutry M."/>
            <person name="Bancroft I."/>
            <person name="Vos P."/>
            <person name="Hoheisel J."/>
            <person name="Zimmermann W."/>
            <person name="Wedler H."/>
            <person name="Ridley P."/>
            <person name="Langham S.-A."/>
            <person name="McCullagh B."/>
            <person name="Bilham L."/>
            <person name="Robben J."/>
            <person name="van der Schueren J."/>
            <person name="Grymonprez B."/>
            <person name="Chuang Y.-J."/>
            <person name="Vandenbussche F."/>
            <person name="Braeken M."/>
            <person name="Weltjens I."/>
            <person name="Voet M."/>
            <person name="Bastiaens I."/>
            <person name="Aert R."/>
            <person name="Defoor E."/>
            <person name="Weitzenegger T."/>
            <person name="Bothe G."/>
            <person name="Ramsperger U."/>
            <person name="Hilbert H."/>
            <person name="Braun M."/>
            <person name="Holzer E."/>
            <person name="Brandt A."/>
            <person name="Peters S."/>
            <person name="van Staveren M."/>
            <person name="Dirkse W."/>
            <person name="Mooijman P."/>
            <person name="Klein Lankhorst R."/>
            <person name="Rose M."/>
            <person name="Hauf J."/>
            <person name="Koetter P."/>
            <person name="Berneiser S."/>
            <person name="Hempel S."/>
            <person name="Feldpausch M."/>
            <person name="Lamberth S."/>
            <person name="Van den Daele H."/>
            <person name="De Keyser A."/>
            <person name="Buysshaert C."/>
            <person name="Gielen J."/>
            <person name="Villarroel R."/>
            <person name="De Clercq R."/>
            <person name="van Montagu M."/>
            <person name="Rogers J."/>
            <person name="Cronin A."/>
            <person name="Quail M.A."/>
            <person name="Bray-Allen S."/>
            <person name="Clark L."/>
            <person name="Doggett J."/>
            <person name="Hall S."/>
            <person name="Kay M."/>
            <person name="Lennard N."/>
            <person name="McLay K."/>
            <person name="Mayes R."/>
            <person name="Pettett A."/>
            <person name="Rajandream M.A."/>
            <person name="Lyne M."/>
            <person name="Benes V."/>
            <person name="Rechmann S."/>
            <person name="Borkova D."/>
            <person name="Bloecker H."/>
            <person name="Scharfe M."/>
            <person name="Grimm M."/>
            <person name="Loehnert T.-H."/>
            <person name="Dose S."/>
            <person name="de Haan M."/>
            <person name="Maarse A.C."/>
            <person name="Schaefer M."/>
            <person name="Mueller-Auer S."/>
            <person name="Gabel C."/>
            <person name="Fuchs M."/>
            <person name="Fartmann B."/>
            <person name="Granderath K."/>
            <person name="Dauner D."/>
            <person name="Herzl A."/>
            <person name="Neumann S."/>
            <person name="Argiriou A."/>
            <person name="Vitale D."/>
            <person name="Liguori R."/>
            <person name="Piravandi E."/>
            <person name="Massenet O."/>
            <person name="Quigley F."/>
            <person name="Clabauld G."/>
            <person name="Muendlein A."/>
            <person name="Felber R."/>
            <person name="Schnabl S."/>
            <person name="Hiller R."/>
            <person name="Schmidt W."/>
            <person name="Lecharny A."/>
            <person name="Aubourg S."/>
            <person name="Chefdor F."/>
            <person name="Cooke R."/>
            <person name="Berger C."/>
            <person name="Monfort A."/>
            <person name="Casacuberta E."/>
            <person name="Gibbons T."/>
            <person name="Weber N."/>
            <person name="Vandenbol M."/>
            <person name="Bargues M."/>
            <person name="Terol J."/>
            <person name="Torres A."/>
            <person name="Perez-Perez A."/>
            <person name="Purnelle B."/>
            <person name="Bent E."/>
            <person name="Johnson S."/>
            <person name="Tacon D."/>
            <person name="Jesse T."/>
            <person name="Heijnen L."/>
            <person name="Schwarz S."/>
            <person name="Scholler P."/>
            <person name="Heber S."/>
            <person name="Francs P."/>
            <person name="Bielke C."/>
            <person name="Frishman D."/>
            <person name="Haase D."/>
            <person name="Lemcke K."/>
            <person name="Mewes H.-W."/>
            <person name="Stocker S."/>
            <person name="Zaccaria P."/>
            <person name="Bevan M."/>
            <person name="Wilson R.K."/>
            <person name="de la Bastide M."/>
            <person name="Habermann K."/>
            <person name="Parnell L."/>
            <person name="Dedhia N."/>
            <person name="Gnoj L."/>
            <person name="Schutz K."/>
            <person name="Huang E."/>
            <person name="Spiegel L."/>
            <person name="Sekhon M."/>
            <person name="Murray J."/>
            <person name="Sheet P."/>
            <person name="Cordes M."/>
            <person name="Abu-Threideh J."/>
            <person name="Stoneking T."/>
            <person name="Kalicki J."/>
            <person name="Graves T."/>
            <person name="Harmon G."/>
            <person name="Edwards J."/>
            <person name="Latreille P."/>
            <person name="Courtney L."/>
            <person name="Cloud J."/>
            <person name="Abbott A."/>
            <person name="Scott K."/>
            <person name="Johnson D."/>
            <person name="Minx P."/>
            <person name="Bentley D."/>
            <person name="Fulton B."/>
            <person name="Miller N."/>
            <person name="Greco T."/>
            <person name="Kemp K."/>
            <person name="Kramer J."/>
            <person name="Fulton L."/>
            <person name="Mardis E."/>
            <person name="Dante M."/>
            <person name="Pepin K."/>
            <person name="Hillier L.W."/>
            <person name="Nelson J."/>
            <person name="Spieth J."/>
            <person name="Ryan E."/>
            <person name="Andrews S."/>
            <person name="Geisel C."/>
            <person name="Layman D."/>
            <person name="Du H."/>
            <person name="Ali J."/>
            <person name="Berghoff A."/>
            <person name="Jones K."/>
            <person name="Drone K."/>
            <person name="Cotton M."/>
            <person name="Joshu C."/>
            <person name="Antonoiu B."/>
            <person name="Zidanic M."/>
            <person name="Strong C."/>
            <person name="Sun H."/>
            <person name="Lamar B."/>
            <person name="Yordan C."/>
            <person name="Ma P."/>
            <person name="Zhong J."/>
            <person name="Preston R."/>
            <person name="Vil D."/>
            <person name="Shekher M."/>
            <person name="Matero A."/>
            <person name="Shah R."/>
            <person name="Swaby I.K."/>
            <person name="O'Shaughnessy A."/>
            <person name="Rodriguez M."/>
            <person name="Hoffman J."/>
            <person name="Till S."/>
            <person name="Granat S."/>
            <person name="Shohdy N."/>
            <person name="Hasegawa A."/>
            <person name="Hameed A."/>
            <person name="Lodhi M."/>
            <person name="Johnson A."/>
            <person name="Chen E."/>
            <person name="Marra M.A."/>
            <person name="Martienssen R."/>
            <person name="McCombie W.R."/>
        </authorList>
    </citation>
    <scope>NUCLEOTIDE SEQUENCE [LARGE SCALE GENOMIC DNA]</scope>
    <source>
        <strain>cv. Columbia</strain>
    </source>
</reference>
<reference key="3">
    <citation type="journal article" date="2017" name="Plant J.">
        <title>Araport11: a complete reannotation of the Arabidopsis thaliana reference genome.</title>
        <authorList>
            <person name="Cheng C.Y."/>
            <person name="Krishnakumar V."/>
            <person name="Chan A.P."/>
            <person name="Thibaud-Nissen F."/>
            <person name="Schobel S."/>
            <person name="Town C.D."/>
        </authorList>
    </citation>
    <scope>GENOME REANNOTATION</scope>
    <source>
        <strain>cv. Columbia</strain>
    </source>
</reference>
<reference key="4">
    <citation type="journal article" date="2003" name="Science">
        <title>Empirical analysis of transcriptional activity in the Arabidopsis genome.</title>
        <authorList>
            <person name="Yamada K."/>
            <person name="Lim J."/>
            <person name="Dale J.M."/>
            <person name="Chen H."/>
            <person name="Shinn P."/>
            <person name="Palm C.J."/>
            <person name="Southwick A.M."/>
            <person name="Wu H.C."/>
            <person name="Kim C.J."/>
            <person name="Nguyen M."/>
            <person name="Pham P.K."/>
            <person name="Cheuk R.F."/>
            <person name="Karlin-Newmann G."/>
            <person name="Liu S.X."/>
            <person name="Lam B."/>
            <person name="Sakano H."/>
            <person name="Wu T."/>
            <person name="Yu G."/>
            <person name="Miranda M."/>
            <person name="Quach H.L."/>
            <person name="Tripp M."/>
            <person name="Chang C.H."/>
            <person name="Lee J.M."/>
            <person name="Toriumi M.J."/>
            <person name="Chan M.M."/>
            <person name="Tang C.C."/>
            <person name="Onodera C.S."/>
            <person name="Deng J.M."/>
            <person name="Akiyama K."/>
            <person name="Ansari Y."/>
            <person name="Arakawa T."/>
            <person name="Banh J."/>
            <person name="Banno F."/>
            <person name="Bowser L."/>
            <person name="Brooks S.Y."/>
            <person name="Carninci P."/>
            <person name="Chao Q."/>
            <person name="Choy N."/>
            <person name="Enju A."/>
            <person name="Goldsmith A.D."/>
            <person name="Gurjal M."/>
            <person name="Hansen N.F."/>
            <person name="Hayashizaki Y."/>
            <person name="Johnson-Hopson C."/>
            <person name="Hsuan V.W."/>
            <person name="Iida K."/>
            <person name="Karnes M."/>
            <person name="Khan S."/>
            <person name="Koesema E."/>
            <person name="Ishida J."/>
            <person name="Jiang P.X."/>
            <person name="Jones T."/>
            <person name="Kawai J."/>
            <person name="Kamiya A."/>
            <person name="Meyers C."/>
            <person name="Nakajima M."/>
            <person name="Narusaka M."/>
            <person name="Seki M."/>
            <person name="Sakurai T."/>
            <person name="Satou M."/>
            <person name="Tamse R."/>
            <person name="Vaysberg M."/>
            <person name="Wallender E.K."/>
            <person name="Wong C."/>
            <person name="Yamamura Y."/>
            <person name="Yuan S."/>
            <person name="Shinozaki K."/>
            <person name="Davis R.W."/>
            <person name="Theologis A."/>
            <person name="Ecker J.R."/>
        </authorList>
    </citation>
    <scope>NUCLEOTIDE SEQUENCE [LARGE SCALE MRNA] OF 6-673</scope>
    <source>
        <strain>cv. Columbia</strain>
    </source>
</reference>
<reference key="5">
    <citation type="journal article" date="2001" name="Nature">
        <title>Maize yellow stripe1 encodes a membrane protein directly involved in Fe(III) uptake.</title>
        <authorList>
            <person name="Curie C."/>
            <person name="Panaviene Z."/>
            <person name="Loulergue C."/>
            <person name="Dellaporta S.L."/>
            <person name="Briat J.-F."/>
            <person name="Walker E.L."/>
        </authorList>
    </citation>
    <scope>GENE FAMILY</scope>
    <scope>NOMENCLATURE</scope>
</reference>
<reference key="6">
    <citation type="journal article" date="2003" name="J. Biol. Chem.">
        <title>Expression profiles of Arabidopsis thaliana in mineral deficiencies reveal novel transporters involved in metal homeostasis.</title>
        <authorList>
            <person name="Wintz H."/>
            <person name="Fox T."/>
            <person name="Wu Y.-Y."/>
            <person name="Feng V."/>
            <person name="Chen W."/>
            <person name="Chang H.-S."/>
            <person name="Zhu T."/>
            <person name="Vulpe C.D."/>
        </authorList>
    </citation>
    <scope>TISSUE SPECIFICITY</scope>
    <scope>INDUCTION</scope>
</reference>
<reference key="7">
    <citation type="journal article" date="2005" name="Plant J.">
        <title>A loss-of-function mutation in AtYSL1 reveals its role in iron and nicotianamine seed loading.</title>
        <authorList>
            <person name="Le Jean M."/>
            <person name="Schikora A."/>
            <person name="Mari S."/>
            <person name="Briat J.-F."/>
            <person name="Curie C."/>
        </authorList>
    </citation>
    <scope>FUNCTION</scope>
    <scope>DISRUPTION PHENOTYPE</scope>
    <scope>TISSUE SPECIFICITY</scope>
    <scope>INDUCTION</scope>
</reference>
<reference key="8">
    <citation type="journal article" date="2006" name="Plant Physiol.">
        <title>Mutations in Arabidopsis yellow stripe-like1 and yellow stripe-like3 reveal their roles in metal ion homeostasis and loading of metal ions in seeds.</title>
        <authorList>
            <person name="Waters B.M."/>
            <person name="Chu H.-H."/>
            <person name="DiDonato R.J. Jr."/>
            <person name="Roberts L.A."/>
            <person name="Eisley R.B."/>
            <person name="Lahner B."/>
            <person name="Salt D.E."/>
            <person name="Walker E.L."/>
        </authorList>
    </citation>
    <scope>FUNCTION</scope>
    <scope>DISRUPTION PHENOTYPE</scope>
    <scope>TISSUE SPECIFICITY</scope>
    <scope>DEVELOPMENTAL STAGE</scope>
    <scope>INDUCTION</scope>
</reference>
<keyword id="KW-0406">Ion transport</keyword>
<keyword id="KW-0408">Iron</keyword>
<keyword id="KW-0410">Iron transport</keyword>
<keyword id="KW-0472">Membrane</keyword>
<keyword id="KW-1185">Reference proteome</keyword>
<keyword id="KW-0812">Transmembrane</keyword>
<keyword id="KW-1133">Transmembrane helix</keyword>
<keyword id="KW-0813">Transport</keyword>
<accession>Q6R3L0</accession>
<accession>O22979</accession>
<accession>Q94EY9</accession>
<accession>Q9SU45</accession>
<protein>
    <recommendedName>
        <fullName>Metal-nicotianamine transporter YSL1</fullName>
    </recommendedName>
    <alternativeName>
        <fullName>Protein YELLOW STRIPE LIKE 1</fullName>
        <shortName>AtYSL1</shortName>
    </alternativeName>
</protein>
<proteinExistence type="evidence at transcript level"/>